<comment type="function">
    <text evidence="1">Pectinolytic enzymes consist of four classes of enzymes: pectine lyase, polygalacturonase, pectin methylesterase and rhamnogalacturonase. Hydrolyzes alpha-D-galacturonopyranosyl-(1,2)-alpha-L-rhamnopyranosyl linkages in the backbone of the hairy regions of pectins (By similarity).</text>
</comment>
<comment type="subcellular location">
    <subcellularLocation>
        <location evidence="1">Secreted</location>
    </subcellularLocation>
</comment>
<comment type="similarity">
    <text evidence="3">Belongs to the glycosyl hydrolase 28 family.</text>
</comment>
<comment type="caution">
    <text evidence="3">Lacks the conserved His residue in position 290 essential for rhamnogalacturonase activity. Its enzyme activity is therefore unsure.</text>
</comment>
<reference key="1">
    <citation type="journal article" date="2006" name="Biochem. J.">
        <title>A new group of exo-acting family 28 glycoside hydrolases of Aspergillus niger that are involved in pectin degradation.</title>
        <authorList>
            <person name="Martens-Uzunova E.S."/>
            <person name="Zandleven J.S."/>
            <person name="Benen J.A."/>
            <person name="Awad H."/>
            <person name="Kools H.J."/>
            <person name="Beldman G."/>
            <person name="Voragen A.G."/>
            <person name="Van den Berg J.A."/>
            <person name="Schaap P.J."/>
        </authorList>
    </citation>
    <scope>NUCLEOTIDE SEQUENCE [GENOMIC DNA]</scope>
</reference>
<reference key="2">
    <citation type="journal article" date="2007" name="Nat. Biotechnol.">
        <title>Genome sequencing and analysis of the versatile cell factory Aspergillus niger CBS 513.88.</title>
        <authorList>
            <person name="Pel H.J."/>
            <person name="de Winde J.H."/>
            <person name="Archer D.B."/>
            <person name="Dyer P.S."/>
            <person name="Hofmann G."/>
            <person name="Schaap P.J."/>
            <person name="Turner G."/>
            <person name="de Vries R.P."/>
            <person name="Albang R."/>
            <person name="Albermann K."/>
            <person name="Andersen M.R."/>
            <person name="Bendtsen J.D."/>
            <person name="Benen J.A.E."/>
            <person name="van den Berg M."/>
            <person name="Breestraat S."/>
            <person name="Caddick M.X."/>
            <person name="Contreras R."/>
            <person name="Cornell M."/>
            <person name="Coutinho P.M."/>
            <person name="Danchin E.G.J."/>
            <person name="Debets A.J.M."/>
            <person name="Dekker P."/>
            <person name="van Dijck P.W.M."/>
            <person name="van Dijk A."/>
            <person name="Dijkhuizen L."/>
            <person name="Driessen A.J.M."/>
            <person name="d'Enfert C."/>
            <person name="Geysens S."/>
            <person name="Goosen C."/>
            <person name="Groot G.S.P."/>
            <person name="de Groot P.W.J."/>
            <person name="Guillemette T."/>
            <person name="Henrissat B."/>
            <person name="Herweijer M."/>
            <person name="van den Hombergh J.P.T.W."/>
            <person name="van den Hondel C.A.M.J.J."/>
            <person name="van der Heijden R.T.J.M."/>
            <person name="van der Kaaij R.M."/>
            <person name="Klis F.M."/>
            <person name="Kools H.J."/>
            <person name="Kubicek C.P."/>
            <person name="van Kuyk P.A."/>
            <person name="Lauber J."/>
            <person name="Lu X."/>
            <person name="van der Maarel M.J.E.C."/>
            <person name="Meulenberg R."/>
            <person name="Menke H."/>
            <person name="Mortimer M.A."/>
            <person name="Nielsen J."/>
            <person name="Oliver S.G."/>
            <person name="Olsthoorn M."/>
            <person name="Pal K."/>
            <person name="van Peij N.N.M.E."/>
            <person name="Ram A.F.J."/>
            <person name="Rinas U."/>
            <person name="Roubos J.A."/>
            <person name="Sagt C.M.J."/>
            <person name="Schmoll M."/>
            <person name="Sun J."/>
            <person name="Ussery D."/>
            <person name="Varga J."/>
            <person name="Vervecken W."/>
            <person name="van de Vondervoort P.J.J."/>
            <person name="Wedler H."/>
            <person name="Woesten H.A.B."/>
            <person name="Zeng A.-P."/>
            <person name="van Ooyen A.J.J."/>
            <person name="Visser J."/>
            <person name="Stam H."/>
        </authorList>
    </citation>
    <scope>NUCLEOTIDE SEQUENCE [LARGE SCALE GENOMIC DNA]</scope>
    <source>
        <strain>ATCC MYA-4892 / CBS 513.88 / FGSC A1513</strain>
    </source>
</reference>
<organism>
    <name type="scientific">Aspergillus niger (strain ATCC MYA-4892 / CBS 513.88 / FGSC A1513)</name>
    <dbReference type="NCBI Taxonomy" id="425011"/>
    <lineage>
        <taxon>Eukaryota</taxon>
        <taxon>Fungi</taxon>
        <taxon>Dikarya</taxon>
        <taxon>Ascomycota</taxon>
        <taxon>Pezizomycotina</taxon>
        <taxon>Eurotiomycetes</taxon>
        <taxon>Eurotiomycetidae</taxon>
        <taxon>Eurotiales</taxon>
        <taxon>Aspergillaceae</taxon>
        <taxon>Aspergillus</taxon>
        <taxon>Aspergillus subgen. Circumdati</taxon>
    </lineage>
</organism>
<protein>
    <recommendedName>
        <fullName>Putative rhamnogalacturonase D</fullName>
        <shortName>RGase D</shortName>
        <shortName>RHG D</shortName>
        <ecNumber>3.2.1.-</ecNumber>
    </recommendedName>
</protein>
<proteinExistence type="inferred from homology"/>
<feature type="signal peptide" evidence="2">
    <location>
        <begin position="1"/>
        <end position="16"/>
    </location>
</feature>
<feature type="chain" id="PRO_0000394956" description="Putative rhamnogalacturonase D">
    <location>
        <begin position="17"/>
        <end position="443"/>
    </location>
</feature>
<feature type="active site" description="Proton donor" evidence="1">
    <location>
        <position position="215"/>
    </location>
</feature>
<feature type="glycosylation site" description="N-linked (GlcNAc...) asparagine" evidence="2">
    <location>
        <position position="47"/>
    </location>
</feature>
<feature type="glycosylation site" description="N-linked (GlcNAc...) asparagine" evidence="2">
    <location>
        <position position="103"/>
    </location>
</feature>
<feature type="glycosylation site" description="N-linked (GlcNAc...) asparagine" evidence="2">
    <location>
        <position position="124"/>
    </location>
</feature>
<feature type="glycosylation site" description="N-linked (GlcNAc...) asparagine" evidence="2">
    <location>
        <position position="152"/>
    </location>
</feature>
<feature type="glycosylation site" description="N-linked (GlcNAc...) asparagine" evidence="2">
    <location>
        <position position="235"/>
    </location>
</feature>
<feature type="glycosylation site" description="N-linked (GlcNAc...) asparagine" evidence="2">
    <location>
        <position position="250"/>
    </location>
</feature>
<feature type="glycosylation site" description="N-linked (GlcNAc...) asparagine" evidence="2">
    <location>
        <position position="263"/>
    </location>
</feature>
<feature type="glycosylation site" description="N-linked (GlcNAc...) asparagine" evidence="2">
    <location>
        <position position="276"/>
    </location>
</feature>
<feature type="glycosylation site" description="N-linked (GlcNAc...) asparagine" evidence="2">
    <location>
        <position position="281"/>
    </location>
</feature>
<feature type="glycosylation site" description="N-linked (GlcNAc...) asparagine" evidence="2">
    <location>
        <position position="346"/>
    </location>
</feature>
<feature type="glycosylation site" description="N-linked (GlcNAc...) asparagine" evidence="2">
    <location>
        <position position="380"/>
    </location>
</feature>
<feature type="disulfide bond" evidence="1">
    <location>
        <begin position="37"/>
        <end position="63"/>
    </location>
</feature>
<feature type="disulfide bond" evidence="1">
    <location>
        <begin position="217"/>
        <end position="234"/>
    </location>
</feature>
<feature type="disulfide bond" evidence="1">
    <location>
        <begin position="338"/>
        <end position="344"/>
    </location>
</feature>
<feature type="disulfide bond" evidence="1">
    <location>
        <begin position="366"/>
        <end position="375"/>
    </location>
</feature>
<sequence length="443" mass="47724">MLVTSLIALLPAIAAAQVSGTVGPRTSASAKAAEKVCNVLDYGASANSTIDIGPPLKEAFQDCQTGGLVYIPEGDYLLSSWVSLVYGSGWALQLDGIIYRDKNVTDGGNMIFIEHTSDIEIFSNNSAGAIQGYGYLFHEQDEYGPRILRLNNVTDFSVHDLILVDSPAYFLNLVESYNGEVYNMVIRGASMGGLDGIDISGANYWIHDVEVTNGDECVTVKSPSANVRVENVFCNHSGGCAMGSLGTDTNISNIEFENIYTYNSTQMYMIKSNGGNGTVTNCSFKNFIGYSNAYMLDLDTYWGDESDGDGIKYENIGFENWKGTSSNGIQRSPIRILCPDANPCTNITLTAVELWTDTGDYVKQECSSAYGEGECLRQQNGTLASYSFTTTITSVPVTAYSPTTTMPGLISTSMDTTTSIPIPTIPTSFFPGASAYSTLMANM</sequence>
<name>RHGD_ASPNC</name>
<evidence type="ECO:0000250" key="1"/>
<evidence type="ECO:0000255" key="2"/>
<evidence type="ECO:0000305" key="3"/>
<keyword id="KW-0119">Carbohydrate metabolism</keyword>
<keyword id="KW-0961">Cell wall biogenesis/degradation</keyword>
<keyword id="KW-1015">Disulfide bond</keyword>
<keyword id="KW-0325">Glycoprotein</keyword>
<keyword id="KW-0326">Glycosidase</keyword>
<keyword id="KW-0378">Hydrolase</keyword>
<keyword id="KW-0624">Polysaccharide degradation</keyword>
<keyword id="KW-1185">Reference proteome</keyword>
<keyword id="KW-0964">Secreted</keyword>
<keyword id="KW-0732">Signal</keyword>
<accession>A2QWT2</accession>
<accession>Q27UA5</accession>
<dbReference type="EC" id="3.2.1.-"/>
<dbReference type="EMBL" id="DQ374430">
    <property type="protein sequence ID" value="ABD61570.1"/>
    <property type="molecule type" value="Genomic_DNA"/>
</dbReference>
<dbReference type="EMBL" id="AM270241">
    <property type="protein sequence ID" value="CAK96934.1"/>
    <property type="molecule type" value="Genomic_DNA"/>
</dbReference>
<dbReference type="RefSeq" id="XP_001394615.2">
    <property type="nucleotide sequence ID" value="XM_001394578.2"/>
</dbReference>
<dbReference type="SMR" id="A2QWT2"/>
<dbReference type="CAZy" id="GH28">
    <property type="family name" value="Glycoside Hydrolase Family 28"/>
</dbReference>
<dbReference type="GlyCosmos" id="A2QWT2">
    <property type="glycosylation" value="11 sites, No reported glycans"/>
</dbReference>
<dbReference type="EnsemblFungi" id="CAK96934">
    <property type="protein sequence ID" value="CAK96934"/>
    <property type="gene ID" value="An11g06320"/>
</dbReference>
<dbReference type="GeneID" id="4984859"/>
<dbReference type="KEGG" id="ang:An11g06320"/>
<dbReference type="VEuPathDB" id="FungiDB:An11g06320"/>
<dbReference type="HOGENOM" id="CLU_016031_7_2_1"/>
<dbReference type="Proteomes" id="UP000006706">
    <property type="component" value="Chromosome 7R"/>
</dbReference>
<dbReference type="GO" id="GO:0005576">
    <property type="term" value="C:extracellular region"/>
    <property type="evidence" value="ECO:0007669"/>
    <property type="project" value="UniProtKB-SubCell"/>
</dbReference>
<dbReference type="GO" id="GO:0004650">
    <property type="term" value="F:polygalacturonase activity"/>
    <property type="evidence" value="ECO:0007669"/>
    <property type="project" value="InterPro"/>
</dbReference>
<dbReference type="GO" id="GO:0046576">
    <property type="term" value="F:rhamnogalacturonan alpha-L-rhamnopyranosyl-(1-&gt;4)-alpha-D-galactopyranosyluronide lyase activity"/>
    <property type="evidence" value="ECO:0007669"/>
    <property type="project" value="UniProtKB-ARBA"/>
</dbReference>
<dbReference type="GO" id="GO:0071555">
    <property type="term" value="P:cell wall organization"/>
    <property type="evidence" value="ECO:0007669"/>
    <property type="project" value="UniProtKB-KW"/>
</dbReference>
<dbReference type="GO" id="GO:0000272">
    <property type="term" value="P:polysaccharide catabolic process"/>
    <property type="evidence" value="ECO:0007669"/>
    <property type="project" value="UniProtKB-KW"/>
</dbReference>
<dbReference type="Gene3D" id="2.160.20.10">
    <property type="entry name" value="Single-stranded right-handed beta-helix, Pectin lyase-like"/>
    <property type="match status" value="1"/>
</dbReference>
<dbReference type="InterPro" id="IPR000743">
    <property type="entry name" value="Glyco_hydro_28"/>
</dbReference>
<dbReference type="InterPro" id="IPR012334">
    <property type="entry name" value="Pectin_lyas_fold"/>
</dbReference>
<dbReference type="InterPro" id="IPR011050">
    <property type="entry name" value="Pectin_lyase_fold/virulence"/>
</dbReference>
<dbReference type="PANTHER" id="PTHR31736">
    <property type="match status" value="1"/>
</dbReference>
<dbReference type="PANTHER" id="PTHR31736:SF19">
    <property type="entry name" value="PECTIN LYASE SUPERFAMILY PROTEIN-RELATED"/>
    <property type="match status" value="1"/>
</dbReference>
<dbReference type="Pfam" id="PF00295">
    <property type="entry name" value="Glyco_hydro_28"/>
    <property type="match status" value="1"/>
</dbReference>
<dbReference type="SUPFAM" id="SSF51126">
    <property type="entry name" value="Pectin lyase-like"/>
    <property type="match status" value="1"/>
</dbReference>
<gene>
    <name type="primary">rhgD</name>
    <name type="ORF">An11g06320</name>
</gene>